<feature type="chain" id="PRO_0000122677" description="Protein RecA">
    <location>
        <begin position="1"/>
        <end position="343"/>
    </location>
</feature>
<feature type="binding site" evidence="1">
    <location>
        <begin position="65"/>
        <end position="72"/>
    </location>
    <ligand>
        <name>ATP</name>
        <dbReference type="ChEBI" id="CHEBI:30616"/>
    </ligand>
</feature>
<protein>
    <recommendedName>
        <fullName evidence="1">Protein RecA</fullName>
    </recommendedName>
    <alternativeName>
        <fullName evidence="1">Recombinase A</fullName>
    </alternativeName>
</protein>
<dbReference type="EMBL" id="AL111168">
    <property type="protein sequence ID" value="CAL35769.1"/>
    <property type="molecule type" value="Genomic_DNA"/>
</dbReference>
<dbReference type="PIR" id="F81264">
    <property type="entry name" value="F81264"/>
</dbReference>
<dbReference type="RefSeq" id="WP_002851424.1">
    <property type="nucleotide sequence ID" value="NZ_SZUC01000002.1"/>
</dbReference>
<dbReference type="RefSeq" id="YP_002345041.1">
    <property type="nucleotide sequence ID" value="NC_002163.1"/>
</dbReference>
<dbReference type="SMR" id="Q0P7V6"/>
<dbReference type="IntAct" id="Q0P7V6">
    <property type="interactions" value="14"/>
</dbReference>
<dbReference type="STRING" id="192222.Cj1673c"/>
<dbReference type="PaxDb" id="192222-Cj1673c"/>
<dbReference type="EnsemblBacteria" id="CAL35769">
    <property type="protein sequence ID" value="CAL35769"/>
    <property type="gene ID" value="Cj1673c"/>
</dbReference>
<dbReference type="GeneID" id="905948"/>
<dbReference type="KEGG" id="cje:Cj1673c"/>
<dbReference type="PATRIC" id="fig|192222.6.peg.1648"/>
<dbReference type="eggNOG" id="COG0468">
    <property type="taxonomic scope" value="Bacteria"/>
</dbReference>
<dbReference type="HOGENOM" id="CLU_040469_1_2_7"/>
<dbReference type="OrthoDB" id="9776733at2"/>
<dbReference type="Proteomes" id="UP000000799">
    <property type="component" value="Chromosome"/>
</dbReference>
<dbReference type="GO" id="GO:0005829">
    <property type="term" value="C:cytosol"/>
    <property type="evidence" value="ECO:0007669"/>
    <property type="project" value="TreeGrafter"/>
</dbReference>
<dbReference type="GO" id="GO:0005524">
    <property type="term" value="F:ATP binding"/>
    <property type="evidence" value="ECO:0007669"/>
    <property type="project" value="UniProtKB-UniRule"/>
</dbReference>
<dbReference type="GO" id="GO:0016887">
    <property type="term" value="F:ATP hydrolysis activity"/>
    <property type="evidence" value="ECO:0007669"/>
    <property type="project" value="InterPro"/>
</dbReference>
<dbReference type="GO" id="GO:0140664">
    <property type="term" value="F:ATP-dependent DNA damage sensor activity"/>
    <property type="evidence" value="ECO:0007669"/>
    <property type="project" value="InterPro"/>
</dbReference>
<dbReference type="GO" id="GO:0003684">
    <property type="term" value="F:damaged DNA binding"/>
    <property type="evidence" value="ECO:0007669"/>
    <property type="project" value="UniProtKB-UniRule"/>
</dbReference>
<dbReference type="GO" id="GO:0003697">
    <property type="term" value="F:single-stranded DNA binding"/>
    <property type="evidence" value="ECO:0007669"/>
    <property type="project" value="UniProtKB-UniRule"/>
</dbReference>
<dbReference type="GO" id="GO:0006310">
    <property type="term" value="P:DNA recombination"/>
    <property type="evidence" value="ECO:0007669"/>
    <property type="project" value="UniProtKB-UniRule"/>
</dbReference>
<dbReference type="GO" id="GO:0006281">
    <property type="term" value="P:DNA repair"/>
    <property type="evidence" value="ECO:0000315"/>
    <property type="project" value="CACAO"/>
</dbReference>
<dbReference type="GO" id="GO:0009432">
    <property type="term" value="P:SOS response"/>
    <property type="evidence" value="ECO:0007669"/>
    <property type="project" value="UniProtKB-UniRule"/>
</dbReference>
<dbReference type="CDD" id="cd00983">
    <property type="entry name" value="RecA"/>
    <property type="match status" value="1"/>
</dbReference>
<dbReference type="FunFam" id="3.40.50.300:FF:000087">
    <property type="entry name" value="Recombinase RecA"/>
    <property type="match status" value="1"/>
</dbReference>
<dbReference type="Gene3D" id="3.40.50.300">
    <property type="entry name" value="P-loop containing nucleotide triphosphate hydrolases"/>
    <property type="match status" value="1"/>
</dbReference>
<dbReference type="HAMAP" id="MF_00268">
    <property type="entry name" value="RecA"/>
    <property type="match status" value="1"/>
</dbReference>
<dbReference type="InterPro" id="IPR003593">
    <property type="entry name" value="AAA+_ATPase"/>
</dbReference>
<dbReference type="InterPro" id="IPR013765">
    <property type="entry name" value="DNA_recomb/repair_RecA"/>
</dbReference>
<dbReference type="InterPro" id="IPR020584">
    <property type="entry name" value="DNA_recomb/repair_RecA_CS"/>
</dbReference>
<dbReference type="InterPro" id="IPR027417">
    <property type="entry name" value="P-loop_NTPase"/>
</dbReference>
<dbReference type="InterPro" id="IPR049261">
    <property type="entry name" value="RecA-like_C"/>
</dbReference>
<dbReference type="InterPro" id="IPR049428">
    <property type="entry name" value="RecA-like_N"/>
</dbReference>
<dbReference type="InterPro" id="IPR020588">
    <property type="entry name" value="RecA_ATP-bd"/>
</dbReference>
<dbReference type="InterPro" id="IPR023400">
    <property type="entry name" value="RecA_C_sf"/>
</dbReference>
<dbReference type="InterPro" id="IPR020587">
    <property type="entry name" value="RecA_monomer-monomer_interface"/>
</dbReference>
<dbReference type="NCBIfam" id="TIGR02012">
    <property type="entry name" value="tigrfam_recA"/>
    <property type="match status" value="1"/>
</dbReference>
<dbReference type="PANTHER" id="PTHR45900:SF1">
    <property type="entry name" value="MITOCHONDRIAL DNA REPAIR PROTEIN RECA HOMOLOG-RELATED"/>
    <property type="match status" value="1"/>
</dbReference>
<dbReference type="PANTHER" id="PTHR45900">
    <property type="entry name" value="RECA"/>
    <property type="match status" value="1"/>
</dbReference>
<dbReference type="Pfam" id="PF00154">
    <property type="entry name" value="RecA"/>
    <property type="match status" value="1"/>
</dbReference>
<dbReference type="Pfam" id="PF21096">
    <property type="entry name" value="RecA_C"/>
    <property type="match status" value="1"/>
</dbReference>
<dbReference type="PRINTS" id="PR00142">
    <property type="entry name" value="RECA"/>
</dbReference>
<dbReference type="SMART" id="SM00382">
    <property type="entry name" value="AAA"/>
    <property type="match status" value="1"/>
</dbReference>
<dbReference type="SUPFAM" id="SSF52540">
    <property type="entry name" value="P-loop containing nucleoside triphosphate hydrolases"/>
    <property type="match status" value="1"/>
</dbReference>
<dbReference type="SUPFAM" id="SSF54752">
    <property type="entry name" value="RecA protein, C-terminal domain"/>
    <property type="match status" value="1"/>
</dbReference>
<dbReference type="PROSITE" id="PS00321">
    <property type="entry name" value="RECA_1"/>
    <property type="match status" value="1"/>
</dbReference>
<dbReference type="PROSITE" id="PS50162">
    <property type="entry name" value="RECA_2"/>
    <property type="match status" value="1"/>
</dbReference>
<dbReference type="PROSITE" id="PS50163">
    <property type="entry name" value="RECA_3"/>
    <property type="match status" value="1"/>
</dbReference>
<proteinExistence type="inferred from homology"/>
<organism>
    <name type="scientific">Campylobacter jejuni subsp. jejuni serotype O:2 (strain ATCC 700819 / NCTC 11168)</name>
    <dbReference type="NCBI Taxonomy" id="192222"/>
    <lineage>
        <taxon>Bacteria</taxon>
        <taxon>Pseudomonadati</taxon>
        <taxon>Campylobacterota</taxon>
        <taxon>Epsilonproteobacteria</taxon>
        <taxon>Campylobacterales</taxon>
        <taxon>Campylobacteraceae</taxon>
        <taxon>Campylobacter</taxon>
    </lineage>
</organism>
<sequence>MDDNKRKSLDAALKSLDKTFGKGTILRLGDKEVEQIDSIGTGSVGLDLALGIGGVPKGRIIEIYGPESSGKTTLTLHIIAECQKAGGVCAFIDAEHALDVKYAKNLGVNTDDLYVSQPDFGEQALEIVETIARSGAVDLIVVDSVAALTPKAEIEGDMGDQHVGLQARLMSQALRKLTGIVHKMNTTVIFINQIRMKIGAMGYGTPETTTGGNALKFYASVRLDVRKVATLKQNEEPIGNRVKVKVVKNKVAPPFRQAEFDVMFGEGLSREGELIDYGVKLDIVDKSGAWFSYKDKKLGQGRENSKAFLKENPEIADEITKAIQNSMGIEGMISGSEDDEGEE</sequence>
<reference key="1">
    <citation type="journal article" date="2000" name="Nature">
        <title>The genome sequence of the food-borne pathogen Campylobacter jejuni reveals hypervariable sequences.</title>
        <authorList>
            <person name="Parkhill J."/>
            <person name="Wren B.W."/>
            <person name="Mungall K.L."/>
            <person name="Ketley J.M."/>
            <person name="Churcher C.M."/>
            <person name="Basham D."/>
            <person name="Chillingworth T."/>
            <person name="Davies R.M."/>
            <person name="Feltwell T."/>
            <person name="Holroyd S."/>
            <person name="Jagels K."/>
            <person name="Karlyshev A.V."/>
            <person name="Moule S."/>
            <person name="Pallen M.J."/>
            <person name="Penn C.W."/>
            <person name="Quail M.A."/>
            <person name="Rajandream M.A."/>
            <person name="Rutherford K.M."/>
            <person name="van Vliet A.H.M."/>
            <person name="Whitehead S."/>
            <person name="Barrell B.G."/>
        </authorList>
    </citation>
    <scope>NUCLEOTIDE SEQUENCE [LARGE SCALE GENOMIC DNA]</scope>
    <source>
        <strain>ATCC 700819 / NCTC 11168</strain>
    </source>
</reference>
<evidence type="ECO:0000255" key="1">
    <source>
        <dbReference type="HAMAP-Rule" id="MF_00268"/>
    </source>
</evidence>
<name>RECA_CAMJE</name>
<keyword id="KW-0067">ATP-binding</keyword>
<keyword id="KW-0963">Cytoplasm</keyword>
<keyword id="KW-0227">DNA damage</keyword>
<keyword id="KW-0233">DNA recombination</keyword>
<keyword id="KW-0234">DNA repair</keyword>
<keyword id="KW-0238">DNA-binding</keyword>
<keyword id="KW-0547">Nucleotide-binding</keyword>
<keyword id="KW-1185">Reference proteome</keyword>
<keyword id="KW-0742">SOS response</keyword>
<accession>Q0P7V6</accession>
<accession>P42440</accession>
<accession>Q9PM04</accession>
<gene>
    <name evidence="1" type="primary">recA</name>
    <name type="ordered locus">Cj1673c</name>
</gene>
<comment type="function">
    <text evidence="1">Can catalyze the hydrolysis of ATP in the presence of single-stranded DNA, the ATP-dependent uptake of single-stranded DNA by duplex DNA, and the ATP-dependent hybridization of homologous single-stranded DNAs. It interacts with LexA causing its activation and leading to its autocatalytic cleavage.</text>
</comment>
<comment type="subcellular location">
    <subcellularLocation>
        <location evidence="1">Cytoplasm</location>
    </subcellularLocation>
</comment>
<comment type="similarity">
    <text evidence="1">Belongs to the RecA family.</text>
</comment>